<proteinExistence type="inferred from homology"/>
<keyword id="KW-0963">Cytoplasm</keyword>
<keyword id="KW-0489">Methyltransferase</keyword>
<keyword id="KW-0698">rRNA processing</keyword>
<keyword id="KW-0949">S-adenosyl-L-methionine</keyword>
<keyword id="KW-0808">Transferase</keyword>
<comment type="function">
    <text evidence="1">Specifically methylates the pseudouridine at position 1915 (m3Psi1915) in 23S rRNA.</text>
</comment>
<comment type="catalytic activity">
    <reaction evidence="1">
        <text>pseudouridine(1915) in 23S rRNA + S-adenosyl-L-methionine = N(3)-methylpseudouridine(1915) in 23S rRNA + S-adenosyl-L-homocysteine + H(+)</text>
        <dbReference type="Rhea" id="RHEA:42752"/>
        <dbReference type="Rhea" id="RHEA-COMP:10221"/>
        <dbReference type="Rhea" id="RHEA-COMP:10222"/>
        <dbReference type="ChEBI" id="CHEBI:15378"/>
        <dbReference type="ChEBI" id="CHEBI:57856"/>
        <dbReference type="ChEBI" id="CHEBI:59789"/>
        <dbReference type="ChEBI" id="CHEBI:65314"/>
        <dbReference type="ChEBI" id="CHEBI:74486"/>
        <dbReference type="EC" id="2.1.1.177"/>
    </reaction>
</comment>
<comment type="subunit">
    <text evidence="1">Homodimer.</text>
</comment>
<comment type="subcellular location">
    <subcellularLocation>
        <location evidence="1">Cytoplasm</location>
    </subcellularLocation>
</comment>
<comment type="similarity">
    <text evidence="1">Belongs to the RNA methyltransferase RlmH family.</text>
</comment>
<comment type="sequence caution" evidence="2">
    <conflict type="erroneous initiation">
        <sequence resource="EMBL-CDS" id="AAV63532"/>
    </conflict>
</comment>
<dbReference type="EC" id="2.1.1.177" evidence="1"/>
<dbReference type="EMBL" id="CP000024">
    <property type="protein sequence ID" value="AAV63532.1"/>
    <property type="status" value="ALT_INIT"/>
    <property type="molecule type" value="Genomic_DNA"/>
</dbReference>
<dbReference type="RefSeq" id="WP_011226712.1">
    <property type="nucleotide sequence ID" value="NC_006449.1"/>
</dbReference>
<dbReference type="SMR" id="Q5LXI0"/>
<dbReference type="GeneID" id="66899752"/>
<dbReference type="KEGG" id="stc:str2023"/>
<dbReference type="HOGENOM" id="CLU_100552_0_0_9"/>
<dbReference type="GO" id="GO:0005737">
    <property type="term" value="C:cytoplasm"/>
    <property type="evidence" value="ECO:0007669"/>
    <property type="project" value="UniProtKB-SubCell"/>
</dbReference>
<dbReference type="GO" id="GO:0070038">
    <property type="term" value="F:rRNA (pseudouridine-N3-)-methyltransferase activity"/>
    <property type="evidence" value="ECO:0007669"/>
    <property type="project" value="UniProtKB-UniRule"/>
</dbReference>
<dbReference type="CDD" id="cd18081">
    <property type="entry name" value="RlmH-like"/>
    <property type="match status" value="1"/>
</dbReference>
<dbReference type="Gene3D" id="3.40.1280.10">
    <property type="match status" value="1"/>
</dbReference>
<dbReference type="HAMAP" id="MF_00658">
    <property type="entry name" value="23SrRNA_methyltr_H"/>
    <property type="match status" value="1"/>
</dbReference>
<dbReference type="InterPro" id="IPR029028">
    <property type="entry name" value="Alpha/beta_knot_MTases"/>
</dbReference>
<dbReference type="InterPro" id="IPR003742">
    <property type="entry name" value="RlmH-like"/>
</dbReference>
<dbReference type="InterPro" id="IPR029026">
    <property type="entry name" value="tRNA_m1G_MTases_N"/>
</dbReference>
<dbReference type="NCBIfam" id="NF000985">
    <property type="entry name" value="PRK00103.1-3"/>
    <property type="match status" value="1"/>
</dbReference>
<dbReference type="NCBIfam" id="TIGR00246">
    <property type="entry name" value="tRNA_RlmH_YbeA"/>
    <property type="match status" value="1"/>
</dbReference>
<dbReference type="PANTHER" id="PTHR33603">
    <property type="entry name" value="METHYLTRANSFERASE"/>
    <property type="match status" value="1"/>
</dbReference>
<dbReference type="PANTHER" id="PTHR33603:SF1">
    <property type="entry name" value="RIBOSOMAL RNA LARGE SUBUNIT METHYLTRANSFERASE H"/>
    <property type="match status" value="1"/>
</dbReference>
<dbReference type="Pfam" id="PF02590">
    <property type="entry name" value="SPOUT_MTase"/>
    <property type="match status" value="1"/>
</dbReference>
<dbReference type="PIRSF" id="PIRSF004505">
    <property type="entry name" value="MT_bac"/>
    <property type="match status" value="1"/>
</dbReference>
<dbReference type="SUPFAM" id="SSF75217">
    <property type="entry name" value="alpha/beta knot"/>
    <property type="match status" value="1"/>
</dbReference>
<sequence>MKVKLITVGKLKEKYLKDGIAEYIKRLGRFTKFESIELTDEKTPDNASEAENKAILDKEGQRILAKVGDRDYVIALAIEGKQFPSEQFAKELEQATLRGYSDITFIIGGSLGLSPKVKKRANQLMSFGLLTFPHQLMRLILVEQIYRAFMIQQGSPYHK</sequence>
<evidence type="ECO:0000255" key="1">
    <source>
        <dbReference type="HAMAP-Rule" id="MF_00658"/>
    </source>
</evidence>
<evidence type="ECO:0000305" key="2"/>
<name>RLMH_STRT1</name>
<reference key="1">
    <citation type="journal article" date="2004" name="Nat. Biotechnol.">
        <title>Complete sequence and comparative genome analysis of the dairy bacterium Streptococcus thermophilus.</title>
        <authorList>
            <person name="Bolotin A."/>
            <person name="Quinquis B."/>
            <person name="Renault P."/>
            <person name="Sorokin A."/>
            <person name="Ehrlich S.D."/>
            <person name="Kulakauskas S."/>
            <person name="Lapidus A."/>
            <person name="Goltsman E."/>
            <person name="Mazur M."/>
            <person name="Pusch G.D."/>
            <person name="Fonstein M."/>
            <person name="Overbeek R."/>
            <person name="Kyprides N."/>
            <person name="Purnelle B."/>
            <person name="Prozzi D."/>
            <person name="Ngui K."/>
            <person name="Masuy D."/>
            <person name="Hancy F."/>
            <person name="Burteau S."/>
            <person name="Boutry M."/>
            <person name="Delcour J."/>
            <person name="Goffeau A."/>
            <person name="Hols P."/>
        </authorList>
    </citation>
    <scope>NUCLEOTIDE SEQUENCE [LARGE SCALE GENOMIC DNA]</scope>
    <source>
        <strain>CNRZ 1066</strain>
    </source>
</reference>
<accession>Q5LXI0</accession>
<protein>
    <recommendedName>
        <fullName evidence="1">Ribosomal RNA large subunit methyltransferase H</fullName>
        <ecNumber evidence="1">2.1.1.177</ecNumber>
    </recommendedName>
    <alternativeName>
        <fullName evidence="1">23S rRNA (pseudouridine1915-N3)-methyltransferase</fullName>
    </alternativeName>
    <alternativeName>
        <fullName evidence="1">23S rRNA m3Psi1915 methyltransferase</fullName>
    </alternativeName>
    <alternativeName>
        <fullName evidence="1">rRNA (pseudouridine-N3-)-methyltransferase RlmH</fullName>
    </alternativeName>
</protein>
<organism>
    <name type="scientific">Streptococcus thermophilus (strain CNRZ 1066)</name>
    <dbReference type="NCBI Taxonomy" id="299768"/>
    <lineage>
        <taxon>Bacteria</taxon>
        <taxon>Bacillati</taxon>
        <taxon>Bacillota</taxon>
        <taxon>Bacilli</taxon>
        <taxon>Lactobacillales</taxon>
        <taxon>Streptococcaceae</taxon>
        <taxon>Streptococcus</taxon>
    </lineage>
</organism>
<feature type="chain" id="PRO_0000198196" description="Ribosomal RNA large subunit methyltransferase H">
    <location>
        <begin position="1"/>
        <end position="159"/>
    </location>
</feature>
<feature type="binding site" evidence="1">
    <location>
        <position position="76"/>
    </location>
    <ligand>
        <name>S-adenosyl-L-methionine</name>
        <dbReference type="ChEBI" id="CHEBI:59789"/>
    </ligand>
</feature>
<feature type="binding site" evidence="1">
    <location>
        <position position="108"/>
    </location>
    <ligand>
        <name>S-adenosyl-L-methionine</name>
        <dbReference type="ChEBI" id="CHEBI:59789"/>
    </ligand>
</feature>
<feature type="binding site" evidence="1">
    <location>
        <begin position="127"/>
        <end position="132"/>
    </location>
    <ligand>
        <name>S-adenosyl-L-methionine</name>
        <dbReference type="ChEBI" id="CHEBI:59789"/>
    </ligand>
</feature>
<gene>
    <name evidence="1" type="primary">rlmH</name>
    <name type="ordered locus">str2023</name>
</gene>